<evidence type="ECO:0000255" key="1">
    <source>
        <dbReference type="HAMAP-Rule" id="MF_01384"/>
    </source>
</evidence>
<reference key="1">
    <citation type="journal article" date="2002" name="Arch. Microbiol.">
        <title>Characterization of the urease gene cluster from Rhizobium leguminosarum bv. viciae.</title>
        <authorList>
            <person name="Toffanin A."/>
            <person name="Cadahia E."/>
            <person name="Imperial J."/>
            <person name="Ruiz-Argueso T."/>
            <person name="Palacios M."/>
        </authorList>
    </citation>
    <scope>NUCLEOTIDE SEQUENCE [GENOMIC DNA]</scope>
    <source>
        <strain>UPM791</strain>
    </source>
</reference>
<keyword id="KW-0143">Chaperone</keyword>
<keyword id="KW-0963">Cytoplasm</keyword>
<keyword id="KW-0996">Nickel insertion</keyword>
<name>URED_RHILV</name>
<proteinExistence type="inferred from homology"/>
<sequence length="273" mass="29317">MTTVAASTRPQRAEGRGHLAAKLFDGRTRIRELYQEGAAKIRLPDTFDASMEAVIINTAGGLTGGDRMDWSVDAGAGTRIDVTTQACEKIYKASAGTAEVTTSIEVGAQARVDWLPQETILFDRAALSRRLDVDLDEDSEFLAVEAVLLGRKAMGETVETGLFRDRWRIRRSGRLIHAEELRLSDGVAALAARQAVLGGQVAFATLLYAGPLSEAYLGKVRPLVEGSMGGASAWDGKLVVRLAAADGFSLRKILIPVISALRNGAPVPKVWNL</sequence>
<comment type="function">
    <text evidence="1">Required for maturation of urease via the functional incorporation of the urease nickel metallocenter.</text>
</comment>
<comment type="subunit">
    <text evidence="1">UreD, UreF and UreG form a complex that acts as a GTP-hydrolysis-dependent molecular chaperone, activating the urease apoprotein by helping to assemble the nickel containing metallocenter of UreC. The UreE protein probably delivers the nickel.</text>
</comment>
<comment type="subcellular location">
    <subcellularLocation>
        <location evidence="1">Cytoplasm</location>
    </subcellularLocation>
</comment>
<comment type="similarity">
    <text evidence="1">Belongs to the UreD family.</text>
</comment>
<dbReference type="EMBL" id="AF347070">
    <property type="protein sequence ID" value="AAL83824.1"/>
    <property type="molecule type" value="Genomic_DNA"/>
</dbReference>
<dbReference type="RefSeq" id="WP_018517017.1">
    <property type="nucleotide sequence ID" value="NZ_WIEG01000008.1"/>
</dbReference>
<dbReference type="SMR" id="Q8RPY8"/>
<dbReference type="GO" id="GO:0005737">
    <property type="term" value="C:cytoplasm"/>
    <property type="evidence" value="ECO:0007669"/>
    <property type="project" value="UniProtKB-SubCell"/>
</dbReference>
<dbReference type="GO" id="GO:0016151">
    <property type="term" value="F:nickel cation binding"/>
    <property type="evidence" value="ECO:0007669"/>
    <property type="project" value="UniProtKB-UniRule"/>
</dbReference>
<dbReference type="HAMAP" id="MF_01384">
    <property type="entry name" value="UreD"/>
    <property type="match status" value="1"/>
</dbReference>
<dbReference type="InterPro" id="IPR002669">
    <property type="entry name" value="UreD"/>
</dbReference>
<dbReference type="PANTHER" id="PTHR33643">
    <property type="entry name" value="UREASE ACCESSORY PROTEIN D"/>
    <property type="match status" value="1"/>
</dbReference>
<dbReference type="PANTHER" id="PTHR33643:SF1">
    <property type="entry name" value="UREASE ACCESSORY PROTEIN D"/>
    <property type="match status" value="1"/>
</dbReference>
<dbReference type="Pfam" id="PF01774">
    <property type="entry name" value="UreD"/>
    <property type="match status" value="1"/>
</dbReference>
<feature type="chain" id="PRO_0000340502" description="Urease accessory protein UreD">
    <location>
        <begin position="1"/>
        <end position="273"/>
    </location>
</feature>
<gene>
    <name evidence="1" type="primary">ureD</name>
</gene>
<accession>Q8RPY8</accession>
<organism>
    <name type="scientific">Rhizobium leguminosarum bv. viciae</name>
    <dbReference type="NCBI Taxonomy" id="387"/>
    <lineage>
        <taxon>Bacteria</taxon>
        <taxon>Pseudomonadati</taxon>
        <taxon>Pseudomonadota</taxon>
        <taxon>Alphaproteobacteria</taxon>
        <taxon>Hyphomicrobiales</taxon>
        <taxon>Rhizobiaceae</taxon>
        <taxon>Rhizobium/Agrobacterium group</taxon>
        <taxon>Rhizobium</taxon>
    </lineage>
</organism>
<protein>
    <recommendedName>
        <fullName evidence="1">Urease accessory protein UreD</fullName>
    </recommendedName>
</protein>